<sequence length="211" mass="21931">MPPGPDMTLELACGQAPVCGVDEAGRGPWAGPVSAGAVILDPDRIPKGLNDSKKLSAKARAALEEEIKDVAISWCVGLASIEEIAQLNILHAAGLAMRRAVEGLAVTPAFALVDGNYAFKLPCPVKTVIKGDSLSCSIAAASILAKEARDRIMIEADALYPGYGFAGHKGYHAKVHVEGLRRLGPSPIHRLGWAPVKAALAAAAVNGELDL</sequence>
<reference key="1">
    <citation type="journal article" date="2001" name="Proc. Natl. Acad. Sci. U.S.A.">
        <title>Complete genome sequence of Caulobacter crescentus.</title>
        <authorList>
            <person name="Nierman W.C."/>
            <person name="Feldblyum T.V."/>
            <person name="Laub M.T."/>
            <person name="Paulsen I.T."/>
            <person name="Nelson K.E."/>
            <person name="Eisen J.A."/>
            <person name="Heidelberg J.F."/>
            <person name="Alley M.R.K."/>
            <person name="Ohta N."/>
            <person name="Maddock J.R."/>
            <person name="Potocka I."/>
            <person name="Nelson W.C."/>
            <person name="Newton A."/>
            <person name="Stephens C."/>
            <person name="Phadke N.D."/>
            <person name="Ely B."/>
            <person name="DeBoy R.T."/>
            <person name="Dodson R.J."/>
            <person name="Durkin A.S."/>
            <person name="Gwinn M.L."/>
            <person name="Haft D.H."/>
            <person name="Kolonay J.F."/>
            <person name="Smit J."/>
            <person name="Craven M.B."/>
            <person name="Khouri H.M."/>
            <person name="Shetty J."/>
            <person name="Berry K.J."/>
            <person name="Utterback T.R."/>
            <person name="Tran K."/>
            <person name="Wolf A.M."/>
            <person name="Vamathevan J.J."/>
            <person name="Ermolaeva M.D."/>
            <person name="White O."/>
            <person name="Salzberg S.L."/>
            <person name="Venter J.C."/>
            <person name="Shapiro L."/>
            <person name="Fraser C.M."/>
        </authorList>
    </citation>
    <scope>NUCLEOTIDE SEQUENCE [LARGE SCALE GENOMIC DNA]</scope>
    <source>
        <strain>ATCC 19089 / CIP 103742 / CB 15</strain>
    </source>
</reference>
<evidence type="ECO:0000250" key="1"/>
<evidence type="ECO:0000255" key="2">
    <source>
        <dbReference type="PROSITE-ProRule" id="PRU01319"/>
    </source>
</evidence>
<evidence type="ECO:0000305" key="3"/>
<organism>
    <name type="scientific">Caulobacter vibrioides (strain ATCC 19089 / CIP 103742 / CB 15)</name>
    <name type="common">Caulobacter crescentus</name>
    <dbReference type="NCBI Taxonomy" id="190650"/>
    <lineage>
        <taxon>Bacteria</taxon>
        <taxon>Pseudomonadati</taxon>
        <taxon>Pseudomonadota</taxon>
        <taxon>Alphaproteobacteria</taxon>
        <taxon>Caulobacterales</taxon>
        <taxon>Caulobacteraceae</taxon>
        <taxon>Caulobacter</taxon>
    </lineage>
</organism>
<keyword id="KW-0963">Cytoplasm</keyword>
<keyword id="KW-0255">Endonuclease</keyword>
<keyword id="KW-0378">Hydrolase</keyword>
<keyword id="KW-0464">Manganese</keyword>
<keyword id="KW-0479">Metal-binding</keyword>
<keyword id="KW-0540">Nuclease</keyword>
<keyword id="KW-1185">Reference proteome</keyword>
<dbReference type="EC" id="3.1.26.4"/>
<dbReference type="EMBL" id="AE005673">
    <property type="protein sequence ID" value="AAK22366.1"/>
    <property type="status" value="ALT_INIT"/>
    <property type="molecule type" value="Genomic_DNA"/>
</dbReference>
<dbReference type="PIR" id="B87296">
    <property type="entry name" value="B87296"/>
</dbReference>
<dbReference type="RefSeq" id="NP_419198.1">
    <property type="nucleotide sequence ID" value="NC_002696.2"/>
</dbReference>
<dbReference type="RefSeq" id="WP_012639945.1">
    <property type="nucleotide sequence ID" value="NC_002696.2"/>
</dbReference>
<dbReference type="SMR" id="P0CAW4"/>
<dbReference type="STRING" id="190650.CC_0379"/>
<dbReference type="EnsemblBacteria" id="AAK22366">
    <property type="protein sequence ID" value="AAK22366"/>
    <property type="gene ID" value="CC_0379"/>
</dbReference>
<dbReference type="KEGG" id="ccr:CC_0379"/>
<dbReference type="PATRIC" id="fig|190650.5.peg.381"/>
<dbReference type="eggNOG" id="COG0164">
    <property type="taxonomic scope" value="Bacteria"/>
</dbReference>
<dbReference type="HOGENOM" id="CLU_036532_3_2_5"/>
<dbReference type="Proteomes" id="UP000001816">
    <property type="component" value="Chromosome"/>
</dbReference>
<dbReference type="GO" id="GO:0005737">
    <property type="term" value="C:cytoplasm"/>
    <property type="evidence" value="ECO:0007669"/>
    <property type="project" value="UniProtKB-SubCell"/>
</dbReference>
<dbReference type="GO" id="GO:0032299">
    <property type="term" value="C:ribonuclease H2 complex"/>
    <property type="evidence" value="ECO:0007669"/>
    <property type="project" value="TreeGrafter"/>
</dbReference>
<dbReference type="GO" id="GO:0030145">
    <property type="term" value="F:manganese ion binding"/>
    <property type="evidence" value="ECO:0007669"/>
    <property type="project" value="UniProtKB-UniRule"/>
</dbReference>
<dbReference type="GO" id="GO:0003723">
    <property type="term" value="F:RNA binding"/>
    <property type="evidence" value="ECO:0007669"/>
    <property type="project" value="InterPro"/>
</dbReference>
<dbReference type="GO" id="GO:0004523">
    <property type="term" value="F:RNA-DNA hybrid ribonuclease activity"/>
    <property type="evidence" value="ECO:0007669"/>
    <property type="project" value="UniProtKB-UniRule"/>
</dbReference>
<dbReference type="GO" id="GO:0043137">
    <property type="term" value="P:DNA replication, removal of RNA primer"/>
    <property type="evidence" value="ECO:0007669"/>
    <property type="project" value="TreeGrafter"/>
</dbReference>
<dbReference type="GO" id="GO:0006298">
    <property type="term" value="P:mismatch repair"/>
    <property type="evidence" value="ECO:0007669"/>
    <property type="project" value="TreeGrafter"/>
</dbReference>
<dbReference type="CDD" id="cd07182">
    <property type="entry name" value="RNase_HII_bacteria_HII_like"/>
    <property type="match status" value="1"/>
</dbReference>
<dbReference type="Gene3D" id="3.30.420.10">
    <property type="entry name" value="Ribonuclease H-like superfamily/Ribonuclease H"/>
    <property type="match status" value="1"/>
</dbReference>
<dbReference type="HAMAP" id="MF_00052_B">
    <property type="entry name" value="RNase_HII_B"/>
    <property type="match status" value="1"/>
</dbReference>
<dbReference type="InterPro" id="IPR022898">
    <property type="entry name" value="RNase_HII"/>
</dbReference>
<dbReference type="InterPro" id="IPR001352">
    <property type="entry name" value="RNase_HII/HIII"/>
</dbReference>
<dbReference type="InterPro" id="IPR024567">
    <property type="entry name" value="RNase_HII/HIII_dom"/>
</dbReference>
<dbReference type="InterPro" id="IPR012337">
    <property type="entry name" value="RNaseH-like_sf"/>
</dbReference>
<dbReference type="InterPro" id="IPR036397">
    <property type="entry name" value="RNaseH_sf"/>
</dbReference>
<dbReference type="NCBIfam" id="NF000595">
    <property type="entry name" value="PRK00015.1-3"/>
    <property type="match status" value="1"/>
</dbReference>
<dbReference type="PANTHER" id="PTHR10954">
    <property type="entry name" value="RIBONUCLEASE H2 SUBUNIT A"/>
    <property type="match status" value="1"/>
</dbReference>
<dbReference type="PANTHER" id="PTHR10954:SF18">
    <property type="entry name" value="RIBONUCLEASE HII"/>
    <property type="match status" value="1"/>
</dbReference>
<dbReference type="Pfam" id="PF01351">
    <property type="entry name" value="RNase_HII"/>
    <property type="match status" value="1"/>
</dbReference>
<dbReference type="SUPFAM" id="SSF53098">
    <property type="entry name" value="Ribonuclease H-like"/>
    <property type="match status" value="1"/>
</dbReference>
<dbReference type="PROSITE" id="PS51975">
    <property type="entry name" value="RNASE_H_2"/>
    <property type="match status" value="1"/>
</dbReference>
<gene>
    <name type="primary">rnhB</name>
    <name type="ordered locus">CC_0379</name>
</gene>
<proteinExistence type="inferred from homology"/>
<comment type="function">
    <text evidence="1">Endonuclease that specifically degrades the RNA of RNA-DNA hybrids.</text>
</comment>
<comment type="catalytic activity">
    <reaction>
        <text>Endonucleolytic cleavage to 5'-phosphomonoester.</text>
        <dbReference type="EC" id="3.1.26.4"/>
    </reaction>
</comment>
<comment type="cofactor">
    <cofactor evidence="1">
        <name>Mn(2+)</name>
        <dbReference type="ChEBI" id="CHEBI:29035"/>
    </cofactor>
    <cofactor evidence="1">
        <name>Mg(2+)</name>
        <dbReference type="ChEBI" id="CHEBI:18420"/>
    </cofactor>
    <text evidence="1">Manganese or magnesium. Binds 1 divalent metal ion per monomer in the absence of substrate. May bind a second metal ion after substrate binding.</text>
</comment>
<comment type="subcellular location">
    <subcellularLocation>
        <location evidence="3">Cytoplasm</location>
    </subcellularLocation>
</comment>
<comment type="similarity">
    <text evidence="3">Belongs to the RNase HII family.</text>
</comment>
<comment type="sequence caution" evidence="3">
    <conflict type="erroneous initiation">
        <sequence resource="EMBL-CDS" id="AAK22366"/>
    </conflict>
</comment>
<name>RNH2_CAUVC</name>
<accession>P0CAW4</accession>
<accession>P52975</accession>
<feature type="chain" id="PRO_0000111556" description="Ribonuclease HII">
    <location>
        <begin position="1"/>
        <end position="211"/>
    </location>
</feature>
<feature type="domain" description="RNase H type-2" evidence="2">
    <location>
        <begin position="16"/>
        <end position="205"/>
    </location>
</feature>
<feature type="binding site" evidence="1">
    <location>
        <position position="22"/>
    </location>
    <ligand>
        <name>a divalent metal cation</name>
        <dbReference type="ChEBI" id="CHEBI:60240"/>
    </ligand>
</feature>
<feature type="binding site" evidence="1">
    <location>
        <position position="23"/>
    </location>
    <ligand>
        <name>a divalent metal cation</name>
        <dbReference type="ChEBI" id="CHEBI:60240"/>
    </ligand>
</feature>
<feature type="binding site" evidence="1">
    <location>
        <position position="114"/>
    </location>
    <ligand>
        <name>a divalent metal cation</name>
        <dbReference type="ChEBI" id="CHEBI:60240"/>
    </ligand>
</feature>
<protein>
    <recommendedName>
        <fullName>Ribonuclease HII</fullName>
        <shortName>RNase HII</shortName>
        <ecNumber>3.1.26.4</ecNumber>
    </recommendedName>
</protein>